<reference key="1">
    <citation type="journal article" date="2013" name="BMC Plant Biol.">
        <title>Transcriptome resources and functional characterization of monoterpene synthases for two host species of the mountain pine beetle, lodgepole pine (Pinus contorta) and jack pine (Pinus banksiana).</title>
        <authorList>
            <person name="Hall D.E."/>
            <person name="Yuen M.M.S."/>
            <person name="Jancsik S."/>
            <person name="Quesada A.L."/>
            <person name="Dullat H.K."/>
            <person name="Li M."/>
            <person name="Henderson H."/>
            <person name="Arango-Velez A."/>
            <person name="Liao N.Y."/>
            <person name="Docking R.T."/>
            <person name="Chan S.K."/>
            <person name="Cooke J.E.K."/>
            <person name="Breuil C."/>
            <person name="Jones S.J.M."/>
            <person name="Keeling C.I."/>
            <person name="Bohlmann J."/>
        </authorList>
    </citation>
    <scope>NUCLEOTIDE SEQUENCE [MRNA]</scope>
    <scope>FUNCTION</scope>
    <scope>CATALYTIC ACTIVITY</scope>
    <scope>PATHWAY</scope>
</reference>
<name>RAPN1_PINCO</name>
<keyword id="KW-0150">Chloroplast</keyword>
<keyword id="KW-0456">Lyase</keyword>
<keyword id="KW-0460">Magnesium</keyword>
<keyword id="KW-0479">Metal-binding</keyword>
<keyword id="KW-0934">Plastid</keyword>
<keyword id="KW-0809">Transit peptide</keyword>
<evidence type="ECO:0000250" key="1">
    <source>
        <dbReference type="UniProtKB" id="A0A1C9J6A7"/>
    </source>
</evidence>
<evidence type="ECO:0000250" key="2">
    <source>
        <dbReference type="UniProtKB" id="Q40577"/>
    </source>
</evidence>
<evidence type="ECO:0000255" key="3"/>
<evidence type="ECO:0000269" key="4">
    <source>
    </source>
</evidence>
<evidence type="ECO:0000303" key="5">
    <source>
    </source>
</evidence>
<evidence type="ECO:0000305" key="6"/>
<dbReference type="EC" id="4.2.3.121" evidence="4"/>
<dbReference type="EMBL" id="JQ240295">
    <property type="protein sequence ID" value="AFU73847.1"/>
    <property type="molecule type" value="mRNA"/>
</dbReference>
<dbReference type="SMR" id="R9QMW2"/>
<dbReference type="BRENDA" id="4.2.3.121">
    <property type="organism ID" value="4843"/>
</dbReference>
<dbReference type="UniPathway" id="UPA00213"/>
<dbReference type="UniPathway" id="UPA00924"/>
<dbReference type="GO" id="GO:0009507">
    <property type="term" value="C:chloroplast"/>
    <property type="evidence" value="ECO:0007669"/>
    <property type="project" value="UniProtKB-SubCell"/>
</dbReference>
<dbReference type="GO" id="GO:0000287">
    <property type="term" value="F:magnesium ion binding"/>
    <property type="evidence" value="ECO:0007669"/>
    <property type="project" value="InterPro"/>
</dbReference>
<dbReference type="GO" id="GO:0050550">
    <property type="term" value="F:pinene synthase activity"/>
    <property type="evidence" value="ECO:0000314"/>
    <property type="project" value="UniProtKB"/>
</dbReference>
<dbReference type="GO" id="GO:0010333">
    <property type="term" value="F:terpene synthase activity"/>
    <property type="evidence" value="ECO:0000314"/>
    <property type="project" value="UniProtKB"/>
</dbReference>
<dbReference type="GO" id="GO:0018867">
    <property type="term" value="P:alpha-pinene metabolic process"/>
    <property type="evidence" value="ECO:0000314"/>
    <property type="project" value="UniProtKB"/>
</dbReference>
<dbReference type="GO" id="GO:0016102">
    <property type="term" value="P:diterpenoid biosynthetic process"/>
    <property type="evidence" value="ECO:0007669"/>
    <property type="project" value="InterPro"/>
</dbReference>
<dbReference type="GO" id="GO:0010597">
    <property type="term" value="P:green leaf volatile biosynthetic process"/>
    <property type="evidence" value="ECO:0000314"/>
    <property type="project" value="UniProtKB"/>
</dbReference>
<dbReference type="GO" id="GO:0016114">
    <property type="term" value="P:terpenoid biosynthetic process"/>
    <property type="evidence" value="ECO:0000314"/>
    <property type="project" value="UniProtKB"/>
</dbReference>
<dbReference type="CDD" id="cd00684">
    <property type="entry name" value="Terpene_cyclase_plant_C1"/>
    <property type="match status" value="1"/>
</dbReference>
<dbReference type="FunFam" id="1.50.10.130:FF:000004">
    <property type="entry name" value="Carene synthase, chloroplastic"/>
    <property type="match status" value="1"/>
</dbReference>
<dbReference type="FunFam" id="1.10.600.10:FF:000005">
    <property type="entry name" value="Ent-kaur-16-ene synthase, chloroplastic"/>
    <property type="match status" value="1"/>
</dbReference>
<dbReference type="Gene3D" id="1.10.600.10">
    <property type="entry name" value="Farnesyl Diphosphate Synthase"/>
    <property type="match status" value="1"/>
</dbReference>
<dbReference type="Gene3D" id="1.50.10.130">
    <property type="entry name" value="Terpene synthase, N-terminal domain"/>
    <property type="match status" value="1"/>
</dbReference>
<dbReference type="InterPro" id="IPR008949">
    <property type="entry name" value="Isoprenoid_synthase_dom_sf"/>
</dbReference>
<dbReference type="InterPro" id="IPR034741">
    <property type="entry name" value="Terpene_cyclase-like_1_C"/>
</dbReference>
<dbReference type="InterPro" id="IPR044814">
    <property type="entry name" value="Terpene_cyclase_plant_C1"/>
</dbReference>
<dbReference type="InterPro" id="IPR001906">
    <property type="entry name" value="Terpene_synth_N"/>
</dbReference>
<dbReference type="InterPro" id="IPR036965">
    <property type="entry name" value="Terpene_synth_N_sf"/>
</dbReference>
<dbReference type="InterPro" id="IPR050148">
    <property type="entry name" value="Terpene_synthase-like"/>
</dbReference>
<dbReference type="InterPro" id="IPR005630">
    <property type="entry name" value="Terpene_synthase_metal-bd"/>
</dbReference>
<dbReference type="InterPro" id="IPR008930">
    <property type="entry name" value="Terpenoid_cyclase/PrenylTrfase"/>
</dbReference>
<dbReference type="PANTHER" id="PTHR31739:SF25">
    <property type="entry name" value="(E,E)-GERANYLLINALOOL SYNTHASE"/>
    <property type="match status" value="1"/>
</dbReference>
<dbReference type="PANTHER" id="PTHR31739">
    <property type="entry name" value="ENT-COPALYL DIPHOSPHATE SYNTHASE, CHLOROPLASTIC"/>
    <property type="match status" value="1"/>
</dbReference>
<dbReference type="Pfam" id="PF01397">
    <property type="entry name" value="Terpene_synth"/>
    <property type="match status" value="1"/>
</dbReference>
<dbReference type="Pfam" id="PF03936">
    <property type="entry name" value="Terpene_synth_C"/>
    <property type="match status" value="1"/>
</dbReference>
<dbReference type="SFLD" id="SFLDS00005">
    <property type="entry name" value="Isoprenoid_Synthase_Type_I"/>
    <property type="match status" value="1"/>
</dbReference>
<dbReference type="SFLD" id="SFLDG01019">
    <property type="entry name" value="Terpene_Cyclase_Like_1_C_Termi"/>
    <property type="match status" value="1"/>
</dbReference>
<dbReference type="SFLD" id="SFLDG01014">
    <property type="entry name" value="Terpene_Cyclase_Like_1_N-term"/>
    <property type="match status" value="1"/>
</dbReference>
<dbReference type="SUPFAM" id="SSF48239">
    <property type="entry name" value="Terpenoid cyclases/Protein prenyltransferases"/>
    <property type="match status" value="1"/>
</dbReference>
<dbReference type="SUPFAM" id="SSF48576">
    <property type="entry name" value="Terpenoid synthases"/>
    <property type="match status" value="1"/>
</dbReference>
<organism>
    <name type="scientific">Pinus contorta</name>
    <name type="common">Shore pine</name>
    <name type="synonym">Lodgepole pine</name>
    <dbReference type="NCBI Taxonomy" id="3339"/>
    <lineage>
        <taxon>Eukaryota</taxon>
        <taxon>Viridiplantae</taxon>
        <taxon>Streptophyta</taxon>
        <taxon>Embryophyta</taxon>
        <taxon>Tracheophyta</taxon>
        <taxon>Spermatophyta</taxon>
        <taxon>Pinopsida</taxon>
        <taxon>Pinidae</taxon>
        <taxon>Conifers I</taxon>
        <taxon>Pinales</taxon>
        <taxon>Pinaceae</taxon>
        <taxon>Pinus</taxon>
        <taxon>Pinus subgen. Pinus</taxon>
    </lineage>
</organism>
<feature type="transit peptide" description="Chloroplast" evidence="3">
    <location>
        <begin position="1"/>
        <end status="unknown"/>
    </location>
</feature>
<feature type="chain" id="PRO_0000455026" description="(+)-alpha pinene synthase 1, chloroplastic">
    <location>
        <begin status="unknown"/>
        <end position="628"/>
    </location>
</feature>
<feature type="short sequence motif" description="DDXXD motif" evidence="6">
    <location>
        <begin position="379"/>
        <end position="383"/>
    </location>
</feature>
<feature type="binding site" evidence="2">
    <location>
        <position position="379"/>
    </location>
    <ligand>
        <name>Mg(2+)</name>
        <dbReference type="ChEBI" id="CHEBI:18420"/>
        <label>1</label>
    </ligand>
</feature>
<feature type="binding site" evidence="2">
    <location>
        <position position="379"/>
    </location>
    <ligand>
        <name>Mg(2+)</name>
        <dbReference type="ChEBI" id="CHEBI:18420"/>
        <label>2</label>
    </ligand>
</feature>
<feature type="binding site" evidence="2">
    <location>
        <position position="383"/>
    </location>
    <ligand>
        <name>Mg(2+)</name>
        <dbReference type="ChEBI" id="CHEBI:18420"/>
        <label>1</label>
    </ligand>
</feature>
<feature type="binding site" evidence="2">
    <location>
        <position position="383"/>
    </location>
    <ligand>
        <name>Mg(2+)</name>
        <dbReference type="ChEBI" id="CHEBI:18420"/>
        <label>2</label>
    </ligand>
</feature>
<feature type="binding site" evidence="2">
    <location>
        <position position="531"/>
    </location>
    <ligand>
        <name>Mg(2+)</name>
        <dbReference type="ChEBI" id="CHEBI:18420"/>
        <label>3</label>
    </ligand>
</feature>
<comment type="function">
    <text evidence="4">Monoterpene synthase (TPS) involved in the biosynthesis of monoterpene natural products included in conifer oleoresin secretions and volatile emissions; these compounds contribute to biotic and abiotic stress defense against herbivores and pathogens (PubMed:23679205). Catalyzes the conversion of (2E)-geranyl diphosphate (GPP) to (+)-alpha-pinene (PubMed:23679205).</text>
</comment>
<comment type="catalytic activity">
    <reaction evidence="4">
        <text>(2E)-geranyl diphosphate = (1R,5R)-alpha-pinene + diphosphate</text>
        <dbReference type="Rhea" id="RHEA:32575"/>
        <dbReference type="ChEBI" id="CHEBI:28261"/>
        <dbReference type="ChEBI" id="CHEBI:33019"/>
        <dbReference type="ChEBI" id="CHEBI:58057"/>
        <dbReference type="EC" id="4.2.3.121"/>
    </reaction>
    <physiologicalReaction direction="left-to-right" evidence="4">
        <dbReference type="Rhea" id="RHEA:32576"/>
    </physiologicalReaction>
</comment>
<comment type="cofactor">
    <cofactor evidence="1">
        <name>Mg(2+)</name>
        <dbReference type="ChEBI" id="CHEBI:18420"/>
    </cofactor>
    <cofactor evidence="1">
        <name>Mn(2+)</name>
        <dbReference type="ChEBI" id="CHEBI:29035"/>
    </cofactor>
    <text evidence="1">Binds 3 Mg(2+) or Mn(2+) ions per subunit.</text>
</comment>
<comment type="pathway">
    <text evidence="4">Terpene metabolism; oleoresin biosynthesis.</text>
</comment>
<comment type="pathway">
    <text evidence="4">Secondary metabolite biosynthesis; terpenoid biosynthesis.</text>
</comment>
<comment type="subcellular location">
    <subcellularLocation>
        <location evidence="3">Plastid</location>
        <location evidence="3">Chloroplast</location>
    </subcellularLocation>
</comment>
<comment type="domain">
    <text evidence="6">The Asp-Asp-Xaa-Xaa-Asp/Glu (DDXXD/E) motif is important for the catalytic activity, presumably through binding to Mg(2+).</text>
</comment>
<comment type="similarity">
    <text evidence="6">Belongs to the terpene synthase family. Tpsd subfamily.</text>
</comment>
<proteinExistence type="evidence at protein level"/>
<accession>R9QMW2</accession>
<sequence length="628" mass="71551">MALVSAVPLNSKLCLCRTLFGFSHELKAIHSTVPNLGMCRGGKSIAPSMSMSSTTSVSNEDGVPRRIAGHHSNLWDDDSIASLSTSYEAPSYRERADRVIGEVKNIFDLMSVEDGVFTSPLSDLHHRLWMVDSVERLGIDRHFKHEINSALDHVYSYWTEKGIGRGRESGVTDLNSTALGLRTLRLHGYTVSSHVLDHFKNEKGQFTWSAIQTEGEIRDVLNLFRASLIAFPGEKIMEAAEIFSTMYLKDALQKIPPSGLSQEIEYLLEFGWHTNLPRMETRMYIDVFGEDTTFETPYLIREKLLELAKLEFNIFHSLVKRELQSLTRWWKDYGFPEITFSRHRHVEYYTLAACIANDPKHSAFRLGFGKISHMITILDDIYDTFGTMEELELLTAAFKRWDPSSIECLPDYMKGVYMAVYDNINEMAREAQKIQGWDTVSYARKSWEAFIGAYIQEAKWISSGYLPTFDEYLENGKVSFGSRITTLEPMLTLGFPLPPRILQEIDFPSKFNDLTCAILRLKGDTQCYKADRARGEEASAVSCYMKDHPGITEEDAVNQVNAMVDNLTKELNWELLRPDSGVPISYKKVAFDICRVFHYGYKYRDGFSVASVEIKNLVTRTVVETVPL</sequence>
<gene>
    <name evidence="5" type="primary">TPS-(+)Apin1</name>
</gene>
<protein>
    <recommendedName>
        <fullName evidence="5">(+)-alpha pinene synthase 1, chloroplastic</fullName>
        <ecNumber evidence="4">4.2.3.121</ecNumber>
    </recommendedName>
    <alternativeName>
        <fullName evidence="5">Terpene synthase (+)alphapin1</fullName>
        <shortName evidence="5">PcTPS-(+)alphapin1</shortName>
    </alternativeName>
</protein>